<dbReference type="EC" id="1.2.1.12" evidence="2"/>
<dbReference type="EMBL" id="X97788">
    <property type="protein sequence ID" value="CAA66377.1"/>
    <property type="molecule type" value="Genomic_DNA"/>
</dbReference>
<dbReference type="EMBL" id="Y12602">
    <property type="protein sequence ID" value="CAA73174.1"/>
    <property type="molecule type" value="Genomic_DNA"/>
</dbReference>
<dbReference type="PIR" id="S71350">
    <property type="entry name" value="S71350"/>
</dbReference>
<dbReference type="SMR" id="Q59906"/>
<dbReference type="UniPathway" id="UPA00109">
    <property type="reaction ID" value="UER00184"/>
</dbReference>
<dbReference type="GO" id="GO:0005737">
    <property type="term" value="C:cytoplasm"/>
    <property type="evidence" value="ECO:0007669"/>
    <property type="project" value="UniProtKB-SubCell"/>
</dbReference>
<dbReference type="GO" id="GO:0004365">
    <property type="term" value="F:glyceraldehyde-3-phosphate dehydrogenase (NAD+) (phosphorylating) activity"/>
    <property type="evidence" value="ECO:0000250"/>
    <property type="project" value="UniProtKB"/>
</dbReference>
<dbReference type="GO" id="GO:0051287">
    <property type="term" value="F:NAD binding"/>
    <property type="evidence" value="ECO:0000250"/>
    <property type="project" value="UniProtKB"/>
</dbReference>
<dbReference type="GO" id="GO:0050661">
    <property type="term" value="F:NADP binding"/>
    <property type="evidence" value="ECO:0007669"/>
    <property type="project" value="InterPro"/>
</dbReference>
<dbReference type="GO" id="GO:0006006">
    <property type="term" value="P:glucose metabolic process"/>
    <property type="evidence" value="ECO:0007669"/>
    <property type="project" value="InterPro"/>
</dbReference>
<dbReference type="GO" id="GO:0006096">
    <property type="term" value="P:glycolytic process"/>
    <property type="evidence" value="ECO:0000250"/>
    <property type="project" value="CAFA"/>
</dbReference>
<dbReference type="CDD" id="cd18126">
    <property type="entry name" value="GAPDH_I_C"/>
    <property type="match status" value="1"/>
</dbReference>
<dbReference type="CDD" id="cd05214">
    <property type="entry name" value="GAPDH_I_N"/>
    <property type="match status" value="1"/>
</dbReference>
<dbReference type="FunFam" id="3.30.360.10:FF:000002">
    <property type="entry name" value="Glyceraldehyde-3-phosphate dehydrogenase"/>
    <property type="match status" value="1"/>
</dbReference>
<dbReference type="FunFam" id="3.40.50.720:FF:000001">
    <property type="entry name" value="Glyceraldehyde-3-phosphate dehydrogenase"/>
    <property type="match status" value="1"/>
</dbReference>
<dbReference type="Gene3D" id="3.30.360.10">
    <property type="entry name" value="Dihydrodipicolinate Reductase, domain 2"/>
    <property type="match status" value="1"/>
</dbReference>
<dbReference type="Gene3D" id="3.40.50.720">
    <property type="entry name" value="NAD(P)-binding Rossmann-like Domain"/>
    <property type="match status" value="1"/>
</dbReference>
<dbReference type="InterPro" id="IPR020831">
    <property type="entry name" value="GlycerAld/Erythrose_P_DH"/>
</dbReference>
<dbReference type="InterPro" id="IPR020830">
    <property type="entry name" value="GlycerAld_3-P_DH_AS"/>
</dbReference>
<dbReference type="InterPro" id="IPR020829">
    <property type="entry name" value="GlycerAld_3-P_DH_cat"/>
</dbReference>
<dbReference type="InterPro" id="IPR020828">
    <property type="entry name" value="GlycerAld_3-P_DH_NAD(P)-bd"/>
</dbReference>
<dbReference type="InterPro" id="IPR006424">
    <property type="entry name" value="Glyceraldehyde-3-P_DH_1"/>
</dbReference>
<dbReference type="InterPro" id="IPR036291">
    <property type="entry name" value="NAD(P)-bd_dom_sf"/>
</dbReference>
<dbReference type="NCBIfam" id="TIGR01534">
    <property type="entry name" value="GAPDH-I"/>
    <property type="match status" value="1"/>
</dbReference>
<dbReference type="PANTHER" id="PTHR43148">
    <property type="entry name" value="GLYCERALDEHYDE-3-PHOSPHATE DEHYDROGENASE 2"/>
    <property type="match status" value="1"/>
</dbReference>
<dbReference type="Pfam" id="PF02800">
    <property type="entry name" value="Gp_dh_C"/>
    <property type="match status" value="1"/>
</dbReference>
<dbReference type="Pfam" id="PF00044">
    <property type="entry name" value="Gp_dh_N"/>
    <property type="match status" value="1"/>
</dbReference>
<dbReference type="PIRSF" id="PIRSF000149">
    <property type="entry name" value="GAP_DH"/>
    <property type="match status" value="1"/>
</dbReference>
<dbReference type="PRINTS" id="PR00078">
    <property type="entry name" value="G3PDHDRGNASE"/>
</dbReference>
<dbReference type="SMART" id="SM00846">
    <property type="entry name" value="Gp_dh_N"/>
    <property type="match status" value="1"/>
</dbReference>
<dbReference type="SUPFAM" id="SSF55347">
    <property type="entry name" value="Glyceraldehyde-3-phosphate dehydrogenase-like, C-terminal domain"/>
    <property type="match status" value="1"/>
</dbReference>
<dbReference type="SUPFAM" id="SSF51735">
    <property type="entry name" value="NAD(P)-binding Rossmann-fold domains"/>
    <property type="match status" value="1"/>
</dbReference>
<dbReference type="PROSITE" id="PS00071">
    <property type="entry name" value="GAPDH"/>
    <property type="match status" value="1"/>
</dbReference>
<sequence length="336" mass="35871">MVVKVGINGFGRIGRLAFRRIQNVEGVEVTRINDLTDPNMLAHLLKYDTTQGRFDGTVEVKEGGFEVNGNFIKVSAERDPENIDWATDGVEIVLEATGFFAKKEAAEKPLHANGAKKVVITAPGGNDVKQLFSTLTTSILDGTETVISGASCTTNCLAPMAKALHDAFGIQKGLMTTIHAYTGDQMIVDGHRGGGDLRRARAGAANIVPNSTGARKAIGLVIPELNGKLDGAAQRVPVPTGSVTELVVTLDKNVSVDEINAAMKAASNDSFGYTEDPIVSSDIVGVSYGSLFDATQTKVMEVDGSQLVKVVSWYDNEMSYTAQLVRTLEYFAKIAK</sequence>
<evidence type="ECO:0000250" key="1">
    <source>
        <dbReference type="UniProtKB" id="P00362"/>
    </source>
</evidence>
<evidence type="ECO:0000250" key="2">
    <source>
        <dbReference type="UniProtKB" id="P09124"/>
    </source>
</evidence>
<evidence type="ECO:0000250" key="3">
    <source>
        <dbReference type="UniProtKB" id="Q6GIL8"/>
    </source>
</evidence>
<evidence type="ECO:0000269" key="4">
    <source>
    </source>
</evidence>
<evidence type="ECO:0000303" key="5">
    <source>
    </source>
</evidence>
<evidence type="ECO:0000305" key="6"/>
<gene>
    <name type="primary">gap</name>
    <name type="synonym">gapC</name>
</gene>
<name>G3P_STREQ</name>
<keyword id="KW-0963">Cytoplasm</keyword>
<keyword id="KW-0903">Direct protein sequencing</keyword>
<keyword id="KW-0324">Glycolysis</keyword>
<keyword id="KW-0520">NAD</keyword>
<keyword id="KW-0547">Nucleotide-binding</keyword>
<keyword id="KW-0560">Oxidoreductase</keyword>
<feature type="initiator methionine" description="Removed" evidence="4">
    <location>
        <position position="1"/>
    </location>
</feature>
<feature type="chain" id="PRO_0000145702" description="Glyceraldehyde-3-phosphate dehydrogenase">
    <location>
        <begin position="2"/>
        <end position="336"/>
    </location>
</feature>
<feature type="active site" description="Nucleophile" evidence="1">
    <location>
        <position position="152"/>
    </location>
</feature>
<feature type="binding site" evidence="1">
    <location>
        <begin position="12"/>
        <end position="13"/>
    </location>
    <ligand>
        <name>NAD(+)</name>
        <dbReference type="ChEBI" id="CHEBI:57540"/>
    </ligand>
</feature>
<feature type="binding site" evidence="1">
    <location>
        <position position="34"/>
    </location>
    <ligand>
        <name>NAD(+)</name>
        <dbReference type="ChEBI" id="CHEBI:57540"/>
    </ligand>
</feature>
<feature type="binding site" evidence="1">
    <location>
        <position position="78"/>
    </location>
    <ligand>
        <name>NAD(+)</name>
        <dbReference type="ChEBI" id="CHEBI:57540"/>
    </ligand>
</feature>
<feature type="binding site" evidence="1">
    <location>
        <position position="121"/>
    </location>
    <ligand>
        <name>NAD(+)</name>
        <dbReference type="ChEBI" id="CHEBI:57540"/>
    </ligand>
</feature>
<feature type="binding site" evidence="1">
    <location>
        <begin position="151"/>
        <end position="153"/>
    </location>
    <ligand>
        <name>D-glyceraldehyde 3-phosphate</name>
        <dbReference type="ChEBI" id="CHEBI:59776"/>
    </ligand>
</feature>
<feature type="binding site" evidence="1">
    <location>
        <position position="182"/>
    </location>
    <ligand>
        <name>D-glyceraldehyde 3-phosphate</name>
        <dbReference type="ChEBI" id="CHEBI:59776"/>
    </ligand>
</feature>
<feature type="binding site" evidence="1">
    <location>
        <position position="199"/>
    </location>
    <ligand>
        <name>D-glyceraldehyde 3-phosphate</name>
        <dbReference type="ChEBI" id="CHEBI:59776"/>
    </ligand>
</feature>
<feature type="binding site" evidence="1">
    <location>
        <begin position="212"/>
        <end position="213"/>
    </location>
    <ligand>
        <name>D-glyceraldehyde 3-phosphate</name>
        <dbReference type="ChEBI" id="CHEBI:59776"/>
    </ligand>
</feature>
<feature type="binding site" evidence="1">
    <location>
        <position position="235"/>
    </location>
    <ligand>
        <name>D-glyceraldehyde 3-phosphate</name>
        <dbReference type="ChEBI" id="CHEBI:59776"/>
    </ligand>
</feature>
<feature type="binding site" evidence="1">
    <location>
        <position position="316"/>
    </location>
    <ligand>
        <name>NAD(+)</name>
        <dbReference type="ChEBI" id="CHEBI:57540"/>
    </ligand>
</feature>
<feature type="site" description="Activates thiol group during catalysis" evidence="3">
    <location>
        <position position="179"/>
    </location>
</feature>
<proteinExistence type="evidence at protein level"/>
<protein>
    <recommendedName>
        <fullName evidence="5">Glyceraldehyde-3-phosphate dehydrogenase</fullName>
        <shortName evidence="5">GAPDH</shortName>
        <ecNumber evidence="2">1.2.1.12</ecNumber>
    </recommendedName>
    <alternativeName>
        <fullName evidence="5">NAD-dependent glyceraldehyde-3-phosphate dehydrogenase</fullName>
    </alternativeName>
    <alternativeName>
        <fullName evidence="5">Plasmin receptor</fullName>
    </alternativeName>
    <alternativeName>
        <fullName evidence="5">Plasminogen-binding protein</fullName>
    </alternativeName>
</protein>
<organism>
    <name type="scientific">Streptococcus dysgalactiae subsp. equisimilis</name>
    <name type="common">Streptococcus equisimilis</name>
    <dbReference type="NCBI Taxonomy" id="119602"/>
    <lineage>
        <taxon>Bacteria</taxon>
        <taxon>Bacillati</taxon>
        <taxon>Bacillota</taxon>
        <taxon>Bacilli</taxon>
        <taxon>Lactobacillales</taxon>
        <taxon>Streptococcaceae</taxon>
        <taxon>Streptococcus</taxon>
    </lineage>
</organism>
<accession>Q59906</accession>
<comment type="function">
    <text evidence="4">Catalyzes the oxidative phosphorylation of glyceraldehyde 3-phosphate (G3P) to 1,3-bisphosphoglycerate (BPG) using the cofactor NAD. The first reaction step involves the formation of a hemiacetal intermediate between G3P and a cysteine residue, and this hemiacetal intermediate is then oxidized to a thioester, with concomitant reduction of NAD to NADH. The reduced NADH is then exchanged with the second NAD, and the thioester is attacked by a nucleophilic inorganic phosphate to produce BPG.</text>
</comment>
<comment type="catalytic activity">
    <reaction evidence="2">
        <text>D-glyceraldehyde 3-phosphate + phosphate + NAD(+) = (2R)-3-phospho-glyceroyl phosphate + NADH + H(+)</text>
        <dbReference type="Rhea" id="RHEA:10300"/>
        <dbReference type="ChEBI" id="CHEBI:15378"/>
        <dbReference type="ChEBI" id="CHEBI:43474"/>
        <dbReference type="ChEBI" id="CHEBI:57540"/>
        <dbReference type="ChEBI" id="CHEBI:57604"/>
        <dbReference type="ChEBI" id="CHEBI:57945"/>
        <dbReference type="ChEBI" id="CHEBI:59776"/>
        <dbReference type="EC" id="1.2.1.12"/>
    </reaction>
</comment>
<comment type="pathway">
    <text evidence="6">Carbohydrate degradation; glycolysis; pyruvate from D-glyceraldehyde 3-phosphate: step 1/5.</text>
</comment>
<comment type="subunit">
    <text evidence="4">Homotetramer.</text>
</comment>
<comment type="subcellular location">
    <subcellularLocation>
        <location evidence="6">Cytoplasm</location>
    </subcellularLocation>
</comment>
<comment type="miscellaneous">
    <text evidence="4">Binds human plasminogen.</text>
</comment>
<comment type="similarity">
    <text evidence="6">Belongs to the glyceraldehyde-3-phosphate dehydrogenase family.</text>
</comment>
<reference key="1">
    <citation type="journal article" date="1996" name="Eur. J. Biochem.">
        <title>Cloning, sequencing and functional overexpression of the Streptococcus equisimilis H46A gapC gene encoding a glyceraldehyde-3-phosphate dehydrogenase that also functions as a plasmin(ogen)-binding protein. Purification and biochemical characterization of the protein.</title>
        <authorList>
            <person name="Gase K."/>
            <person name="Gase A."/>
            <person name="Schirmer H."/>
            <person name="Malke H."/>
        </authorList>
    </citation>
    <scope>NUCLEOTIDE SEQUENCE [GENOMIC DNA]</scope>
    <scope>PROTEIN SEQUENCE OF N-TERMINUS</scope>
    <scope>FUNCTION</scope>
    <scope>SUBUNIT</scope>
    <source>
        <strain>H46A</strain>
    </source>
</reference>